<organism>
    <name type="scientific">Komagataella pastoris</name>
    <name type="common">Yeast</name>
    <name type="synonym">Pichia pastoris</name>
    <dbReference type="NCBI Taxonomy" id="4922"/>
    <lineage>
        <taxon>Eukaryota</taxon>
        <taxon>Fungi</taxon>
        <taxon>Dikarya</taxon>
        <taxon>Ascomycota</taxon>
        <taxon>Saccharomycotina</taxon>
        <taxon>Pichiomycetes</taxon>
        <taxon>Pichiales</taxon>
        <taxon>Pichiaceae</taxon>
        <taxon>Komagataella</taxon>
    </lineage>
</organism>
<name>PGK_PICPA</name>
<accession>Q7ZA46</accession>
<protein>
    <recommendedName>
        <fullName>Phosphoglycerate kinase</fullName>
        <ecNumber evidence="4">2.7.2.3</ecNumber>
    </recommendedName>
</protein>
<sequence>MSLSNKLSVKDLDVAGKRVFIRVDFNVPLDGDKITNNQRIVAALPTIQYVLDHKPKVVVLASHLGRPNGEVNPKFSLKPVAAELSSLLGKKVTFLNDSVGPEVEKAVNSASNGEVILLENLRFHIEEEGSQKKDGQKIKADKEAVARFRKQLTALADVYVNDAFGTAHRAHSSMVGFELEQRAAGFLMAKELTYFAKALENPVRPFLAILGGAKVSDKIQLIDNLLDKVDSIIIGGGMAFTFIKVLDNVAIGNSLFDEAGAKLVPGLVEKAKKNNVKLVLPVDFVTADAFSKDAKVGEATVESGIPDGLQGLDAGPKSRELFAATIAEAKTIVWNGPPGVFEFDKFAEGTKSMLAAAIKNAQNGGTVIVGGGDTATVAKKFGGADKLSHVSTGGGASLELLEGKELPGVVYLSKKA</sequence>
<comment type="function">
    <text evidence="2 3 4">Catalyzes one of the two ATP producing reactions in the glycolytic pathway via the reversible conversion of 1,3-diphosphoglycerate to 3-phosphoglycerate (By similarity). Both L- and D- forms of purine and pyrimidine nucleotides can be used as substrates, but the activity is much lower on pyrimidines (By similarity). Negatively regulates the biosynthesis of acetyl-CoA from pyruvate in the mitochondrion (By similarity).</text>
</comment>
<comment type="catalytic activity">
    <reaction evidence="4">
        <text>(2R)-3-phosphoglycerate + ATP = (2R)-3-phospho-glyceroyl phosphate + ADP</text>
        <dbReference type="Rhea" id="RHEA:14801"/>
        <dbReference type="ChEBI" id="CHEBI:30616"/>
        <dbReference type="ChEBI" id="CHEBI:57604"/>
        <dbReference type="ChEBI" id="CHEBI:58272"/>
        <dbReference type="ChEBI" id="CHEBI:456216"/>
        <dbReference type="EC" id="2.7.2.3"/>
    </reaction>
</comment>
<comment type="cofactor">
    <cofactor evidence="3">
        <name>Mg(2+)</name>
        <dbReference type="ChEBI" id="CHEBI:18420"/>
    </cofactor>
</comment>
<comment type="pathway">
    <text evidence="4">Carbohydrate degradation; glycolysis; pyruvate from D-glyceraldehyde 3-phosphate: step 2/5.</text>
</comment>
<comment type="subunit">
    <text evidence="1">Monomer.</text>
</comment>
<comment type="subcellular location">
    <subcellularLocation>
        <location evidence="4">Cytoplasm</location>
    </subcellularLocation>
    <subcellularLocation>
        <location evidence="4">Mitochondrion</location>
    </subcellularLocation>
</comment>
<comment type="similarity">
    <text evidence="6">Belongs to the phosphoglycerate kinase family.</text>
</comment>
<reference key="1">
    <citation type="submission" date="2003-04" db="EMBL/GenBank/DDBJ databases">
        <authorList>
            <person name="Almeida J.R.M."/>
            <person name="Torres F.A.G."/>
        </authorList>
    </citation>
    <scope>NUCLEOTIDE SEQUENCE [GENOMIC DNA]</scope>
</reference>
<dbReference type="EC" id="2.7.2.3" evidence="4"/>
<dbReference type="EMBL" id="AY288296">
    <property type="protein sequence ID" value="AAP37611.1"/>
    <property type="molecule type" value="Genomic_DNA"/>
</dbReference>
<dbReference type="SMR" id="Q7ZA46"/>
<dbReference type="UniPathway" id="UPA00109">
    <property type="reaction ID" value="UER00185"/>
</dbReference>
<dbReference type="GO" id="GO:0005829">
    <property type="term" value="C:cytosol"/>
    <property type="evidence" value="ECO:0007669"/>
    <property type="project" value="TreeGrafter"/>
</dbReference>
<dbReference type="GO" id="GO:0005739">
    <property type="term" value="C:mitochondrion"/>
    <property type="evidence" value="ECO:0007669"/>
    <property type="project" value="UniProtKB-SubCell"/>
</dbReference>
<dbReference type="GO" id="GO:0043531">
    <property type="term" value="F:ADP binding"/>
    <property type="evidence" value="ECO:0007669"/>
    <property type="project" value="TreeGrafter"/>
</dbReference>
<dbReference type="GO" id="GO:0005524">
    <property type="term" value="F:ATP binding"/>
    <property type="evidence" value="ECO:0007669"/>
    <property type="project" value="UniProtKB-KW"/>
</dbReference>
<dbReference type="GO" id="GO:0046872">
    <property type="term" value="F:metal ion binding"/>
    <property type="evidence" value="ECO:0007669"/>
    <property type="project" value="UniProtKB-KW"/>
</dbReference>
<dbReference type="GO" id="GO:0004618">
    <property type="term" value="F:phosphoglycerate kinase activity"/>
    <property type="evidence" value="ECO:0007669"/>
    <property type="project" value="UniProtKB-EC"/>
</dbReference>
<dbReference type="GO" id="GO:0006094">
    <property type="term" value="P:gluconeogenesis"/>
    <property type="evidence" value="ECO:0007669"/>
    <property type="project" value="TreeGrafter"/>
</dbReference>
<dbReference type="GO" id="GO:0006096">
    <property type="term" value="P:glycolytic process"/>
    <property type="evidence" value="ECO:0007669"/>
    <property type="project" value="UniProtKB-KW"/>
</dbReference>
<dbReference type="CDD" id="cd00318">
    <property type="entry name" value="Phosphoglycerate_kinase"/>
    <property type="match status" value="1"/>
</dbReference>
<dbReference type="FunFam" id="3.40.50.1260:FF:000019">
    <property type="entry name" value="Phosphoglycerate kinase 1"/>
    <property type="match status" value="1"/>
</dbReference>
<dbReference type="FunFam" id="3.40.50.1260:FF:000031">
    <property type="entry name" value="Phosphoglycerate kinase 1"/>
    <property type="match status" value="1"/>
</dbReference>
<dbReference type="Gene3D" id="3.40.50.1260">
    <property type="entry name" value="Phosphoglycerate kinase, N-terminal domain"/>
    <property type="match status" value="3"/>
</dbReference>
<dbReference type="HAMAP" id="MF_00145">
    <property type="entry name" value="Phosphoglyc_kinase"/>
    <property type="match status" value="1"/>
</dbReference>
<dbReference type="InterPro" id="IPR001576">
    <property type="entry name" value="Phosphoglycerate_kinase"/>
</dbReference>
<dbReference type="InterPro" id="IPR015911">
    <property type="entry name" value="Phosphoglycerate_kinase_CS"/>
</dbReference>
<dbReference type="InterPro" id="IPR015824">
    <property type="entry name" value="Phosphoglycerate_kinase_N"/>
</dbReference>
<dbReference type="InterPro" id="IPR036043">
    <property type="entry name" value="Phosphoglycerate_kinase_sf"/>
</dbReference>
<dbReference type="PANTHER" id="PTHR11406">
    <property type="entry name" value="PHOSPHOGLYCERATE KINASE"/>
    <property type="match status" value="1"/>
</dbReference>
<dbReference type="PANTHER" id="PTHR11406:SF0">
    <property type="entry name" value="PHOSPHOGLYCERATE KINASE"/>
    <property type="match status" value="1"/>
</dbReference>
<dbReference type="Pfam" id="PF00162">
    <property type="entry name" value="PGK"/>
    <property type="match status" value="1"/>
</dbReference>
<dbReference type="PIRSF" id="PIRSF000724">
    <property type="entry name" value="Pgk"/>
    <property type="match status" value="1"/>
</dbReference>
<dbReference type="PRINTS" id="PR00477">
    <property type="entry name" value="PHGLYCKINASE"/>
</dbReference>
<dbReference type="SUPFAM" id="SSF53748">
    <property type="entry name" value="Phosphoglycerate kinase"/>
    <property type="match status" value="1"/>
</dbReference>
<dbReference type="PROSITE" id="PS00111">
    <property type="entry name" value="PGLYCERATE_KINASE"/>
    <property type="match status" value="1"/>
</dbReference>
<feature type="chain" id="PRO_0000145886" description="Phosphoglycerate kinase">
    <location>
        <begin position="1"/>
        <end position="416"/>
    </location>
</feature>
<feature type="binding site" evidence="3">
    <location>
        <position position="23"/>
    </location>
    <ligand>
        <name>(2R)-3-phosphoglycerate</name>
        <dbReference type="ChEBI" id="CHEBI:58272"/>
    </ligand>
</feature>
<feature type="binding site" evidence="5">
    <location>
        <position position="24"/>
    </location>
    <ligand>
        <name>(2R)-3-phosphoglycerate</name>
        <dbReference type="ChEBI" id="CHEBI:58272"/>
    </ligand>
</feature>
<feature type="binding site" evidence="3">
    <location>
        <position position="25"/>
    </location>
    <ligand>
        <name>(2R)-3-phosphoglycerate</name>
        <dbReference type="ChEBI" id="CHEBI:58272"/>
    </ligand>
</feature>
<feature type="binding site" evidence="5">
    <location>
        <position position="26"/>
    </location>
    <ligand>
        <name>(2R)-3-phosphoglycerate</name>
        <dbReference type="ChEBI" id="CHEBI:58272"/>
    </ligand>
</feature>
<feature type="binding site" evidence="3">
    <location>
        <position position="38"/>
    </location>
    <ligand>
        <name>(2R)-3-phosphoglycerate</name>
        <dbReference type="ChEBI" id="CHEBI:58272"/>
    </ligand>
</feature>
<feature type="binding site" evidence="5">
    <location>
        <position position="39"/>
    </location>
    <ligand>
        <name>(2R)-3-phosphoglycerate</name>
        <dbReference type="ChEBI" id="CHEBI:58272"/>
    </ligand>
</feature>
<feature type="binding site" evidence="3">
    <location>
        <position position="62"/>
    </location>
    <ligand>
        <name>(2R)-3-phosphoglycerate</name>
        <dbReference type="ChEBI" id="CHEBI:58272"/>
    </ligand>
</feature>
<feature type="binding site" evidence="5">
    <location>
        <position position="63"/>
    </location>
    <ligand>
        <name>(2R)-3-phosphoglycerate</name>
        <dbReference type="ChEBI" id="CHEBI:58272"/>
    </ligand>
</feature>
<feature type="binding site" evidence="3">
    <location>
        <position position="65"/>
    </location>
    <ligand>
        <name>(2R)-3-phosphoglycerate</name>
        <dbReference type="ChEBI" id="CHEBI:58272"/>
    </ligand>
</feature>
<feature type="binding site" evidence="5">
    <location>
        <position position="66"/>
    </location>
    <ligand>
        <name>(2R)-3-phosphoglycerate</name>
        <dbReference type="ChEBI" id="CHEBI:58272"/>
    </ligand>
</feature>
<feature type="binding site" evidence="3">
    <location>
        <position position="121"/>
    </location>
    <ligand>
        <name>(2R)-3-phosphoglycerate</name>
        <dbReference type="ChEBI" id="CHEBI:58272"/>
    </ligand>
</feature>
<feature type="binding site" evidence="5">
    <location>
        <position position="122"/>
    </location>
    <ligand>
        <name>(2R)-3-phosphoglycerate</name>
        <dbReference type="ChEBI" id="CHEBI:58272"/>
    </ligand>
</feature>
<feature type="binding site" evidence="3">
    <location>
        <position position="168"/>
    </location>
    <ligand>
        <name>(2R)-3-phosphoglycerate</name>
        <dbReference type="ChEBI" id="CHEBI:58272"/>
    </ligand>
</feature>
<feature type="binding site" evidence="5">
    <location>
        <position position="169"/>
    </location>
    <ligand>
        <name>(2R)-3-phosphoglycerate</name>
        <dbReference type="ChEBI" id="CHEBI:58272"/>
    </ligand>
</feature>
<feature type="binding site" evidence="3">
    <location>
        <position position="212"/>
    </location>
    <ligand>
        <name>ADP</name>
        <dbReference type="ChEBI" id="CHEBI:456216"/>
    </ligand>
</feature>
<feature type="binding site" evidence="3">
    <location>
        <position position="212"/>
    </location>
    <ligand>
        <name>CDP</name>
        <dbReference type="ChEBI" id="CHEBI:58069"/>
    </ligand>
</feature>
<feature type="binding site" evidence="5">
    <location>
        <position position="213"/>
    </location>
    <ligand>
        <name>AMP</name>
        <dbReference type="ChEBI" id="CHEBI:456215"/>
    </ligand>
</feature>
<feature type="binding site" evidence="5">
    <location>
        <position position="213"/>
    </location>
    <ligand>
        <name>ATP</name>
        <dbReference type="ChEBI" id="CHEBI:30616"/>
    </ligand>
</feature>
<feature type="binding site" evidence="3">
    <location>
        <position position="213"/>
    </location>
    <ligand>
        <name>Mg(2+)</name>
        <dbReference type="ChEBI" id="CHEBI:18420"/>
    </ligand>
</feature>
<feature type="binding site" evidence="5">
    <location>
        <position position="214"/>
    </location>
    <ligand>
        <name>AMP</name>
        <dbReference type="ChEBI" id="CHEBI:456215"/>
    </ligand>
</feature>
<feature type="binding site" evidence="3">
    <location>
        <position position="217"/>
    </location>
    <ligand>
        <name>CDP</name>
        <dbReference type="ChEBI" id="CHEBI:58069"/>
    </ligand>
</feature>
<feature type="binding site" evidence="3">
    <location>
        <position position="217"/>
    </location>
    <ligand>
        <name>Mg(2+)</name>
        <dbReference type="ChEBI" id="CHEBI:18420"/>
    </ligand>
</feature>
<feature type="binding site" evidence="5">
    <location>
        <position position="218"/>
    </location>
    <ligand>
        <name>AMP</name>
        <dbReference type="ChEBI" id="CHEBI:456215"/>
    </ligand>
</feature>
<feature type="binding site" evidence="5">
    <location>
        <position position="218"/>
    </location>
    <ligand>
        <name>ATP</name>
        <dbReference type="ChEBI" id="CHEBI:30616"/>
    </ligand>
</feature>
<feature type="binding site" evidence="3">
    <location>
        <position position="236"/>
    </location>
    <ligand>
        <name>ADP</name>
        <dbReference type="ChEBI" id="CHEBI:456216"/>
    </ligand>
</feature>
<feature type="binding site" evidence="3">
    <location>
        <position position="236"/>
    </location>
    <ligand>
        <name>CDP</name>
        <dbReference type="ChEBI" id="CHEBI:58069"/>
    </ligand>
</feature>
<feature type="binding site" evidence="5">
    <location>
        <position position="237"/>
    </location>
    <ligand>
        <name>AMP</name>
        <dbReference type="ChEBI" id="CHEBI:456215"/>
    </ligand>
</feature>
<feature type="binding site" evidence="5">
    <location>
        <position position="237"/>
    </location>
    <ligand>
        <name>ATP</name>
        <dbReference type="ChEBI" id="CHEBI:30616"/>
    </ligand>
</feature>
<feature type="binding site" evidence="5">
    <location>
        <position position="311"/>
    </location>
    <ligand>
        <name>AMP</name>
        <dbReference type="ChEBI" id="CHEBI:456215"/>
    </ligand>
</feature>
<feature type="binding site" evidence="5">
    <location>
        <position position="311"/>
    </location>
    <ligand>
        <name>ATP</name>
        <dbReference type="ChEBI" id="CHEBI:30616"/>
    </ligand>
</feature>
<feature type="binding site" evidence="3">
    <location>
        <position position="336"/>
    </location>
    <ligand>
        <name>CDP</name>
        <dbReference type="ChEBI" id="CHEBI:58069"/>
    </ligand>
</feature>
<feature type="binding site" evidence="3">
    <location>
        <position position="341"/>
    </location>
    <ligand>
        <name>ADP</name>
        <dbReference type="ChEBI" id="CHEBI:456216"/>
    </ligand>
</feature>
<feature type="binding site" evidence="3">
    <location>
        <position position="341"/>
    </location>
    <ligand>
        <name>CDP</name>
        <dbReference type="ChEBI" id="CHEBI:58069"/>
    </ligand>
</feature>
<feature type="binding site" evidence="5">
    <location>
        <position position="342"/>
    </location>
    <ligand>
        <name>AMP</name>
        <dbReference type="ChEBI" id="CHEBI:456215"/>
    </ligand>
</feature>
<feature type="binding site" evidence="5">
    <location>
        <position position="342"/>
    </location>
    <ligand>
        <name>ATP</name>
        <dbReference type="ChEBI" id="CHEBI:30616"/>
    </ligand>
</feature>
<feature type="binding site" evidence="5">
    <location>
        <position position="373"/>
    </location>
    <ligand>
        <name>ATP</name>
        <dbReference type="ChEBI" id="CHEBI:30616"/>
    </ligand>
</feature>
<feature type="binding site" evidence="5">
    <location>
        <position position="373"/>
    </location>
    <ligand>
        <name>Mg(2+)</name>
        <dbReference type="ChEBI" id="CHEBI:18420"/>
    </ligand>
</feature>
<feature type="binding site" evidence="5">
    <location>
        <position position="374"/>
    </location>
    <ligand>
        <name>ATP</name>
        <dbReference type="ChEBI" id="CHEBI:30616"/>
    </ligand>
</feature>
<evidence type="ECO:0000250" key="1"/>
<evidence type="ECO:0000250" key="2">
    <source>
        <dbReference type="UniProtKB" id="A0A7G5KET3"/>
    </source>
</evidence>
<evidence type="ECO:0000250" key="3">
    <source>
        <dbReference type="UniProtKB" id="P00558"/>
    </source>
</evidence>
<evidence type="ECO:0000250" key="4">
    <source>
        <dbReference type="UniProtKB" id="P00560"/>
    </source>
</evidence>
<evidence type="ECO:0000250" key="5">
    <source>
        <dbReference type="UniProtKB" id="Q7SIB7"/>
    </source>
</evidence>
<evidence type="ECO:0000305" key="6"/>
<gene>
    <name type="primary">PGK1</name>
</gene>
<keyword id="KW-0067">ATP-binding</keyword>
<keyword id="KW-0963">Cytoplasm</keyword>
<keyword id="KW-0324">Glycolysis</keyword>
<keyword id="KW-0418">Kinase</keyword>
<keyword id="KW-0460">Magnesium</keyword>
<keyword id="KW-0479">Metal-binding</keyword>
<keyword id="KW-0496">Mitochondrion</keyword>
<keyword id="KW-0547">Nucleotide-binding</keyword>
<keyword id="KW-0808">Transferase</keyword>
<proteinExistence type="inferred from homology"/>